<comment type="function">
    <text evidence="1">Core subunit of the mitochondrial membrane respiratory chain NADH dehydrogenase (Complex I) that is believed to belong to the minimal assembly required for catalysis. Complex I functions in the transfer of electrons from NADH to the respiratory chain. The immediate electron acceptor for the enzyme is believed to be ubiquinone (By similarity).</text>
</comment>
<comment type="catalytic activity">
    <reaction>
        <text>a ubiquinone + NADH + 5 H(+)(in) = a ubiquinol + NAD(+) + 4 H(+)(out)</text>
        <dbReference type="Rhea" id="RHEA:29091"/>
        <dbReference type="Rhea" id="RHEA-COMP:9565"/>
        <dbReference type="Rhea" id="RHEA-COMP:9566"/>
        <dbReference type="ChEBI" id="CHEBI:15378"/>
        <dbReference type="ChEBI" id="CHEBI:16389"/>
        <dbReference type="ChEBI" id="CHEBI:17976"/>
        <dbReference type="ChEBI" id="CHEBI:57540"/>
        <dbReference type="ChEBI" id="CHEBI:57945"/>
        <dbReference type="EC" id="7.1.1.2"/>
    </reaction>
</comment>
<comment type="subcellular location">
    <subcellularLocation>
        <location evidence="1">Mitochondrion inner membrane</location>
        <topology evidence="1">Multi-pass membrane protein</topology>
    </subcellularLocation>
</comment>
<comment type="similarity">
    <text evidence="3">Belongs to the complex I subunit 1 family.</text>
</comment>
<geneLocation type="mitochondrion"/>
<gene>
    <name type="primary">ND1</name>
</gene>
<keyword id="KW-0249">Electron transport</keyword>
<keyword id="KW-0472">Membrane</keyword>
<keyword id="KW-0496">Mitochondrion</keyword>
<keyword id="KW-0999">Mitochondrion inner membrane</keyword>
<keyword id="KW-0520">NAD</keyword>
<keyword id="KW-0679">Respiratory chain</keyword>
<keyword id="KW-1278">Translocase</keyword>
<keyword id="KW-0812">Transmembrane</keyword>
<keyword id="KW-1133">Transmembrane helix</keyword>
<keyword id="KW-0813">Transport</keyword>
<keyword id="KW-0830">Ubiquinone</keyword>
<sequence>MDWFVFFVNSILFIVPVLLAVALLTLVERKVLGYMQLRKGPNIVGPFGLLQPIADGFKLLIKETLKPSNASPYLFFFSPVLFLGIALVLWSVIPVKYSVVSVNLSLMLIIGLSSLSVYSLLGSGWSSNSNYSFLGAVRAVAQTVSYEISLGLILLGVVLFAGGFNVEVIESSQSWSWLMFSCFPLFAIWFVSTLAETNRAPFDLTEGESEIVSGYNVEYAGGPFAMFFIAEYANIIFINLLSVLLFLGGSSPMGEFFPVNVLVVSLKAGVLVLLFLWVRASYPRFRYDQLMYLTWKKYLPLSLSFLVFFVVLLGVLDSLPPSSCFL</sequence>
<reference key="1">
    <citation type="journal article" date="1995" name="Genetics">
        <title>Nucleotide sequence and gene organization of the starfish Asterina pectinifera mitochondrial genome.</title>
        <authorList>
            <person name="Asakawa S."/>
            <person name="Himeno H."/>
            <person name="Miura K."/>
            <person name="Watanabe K."/>
        </authorList>
    </citation>
    <scope>NUCLEOTIDE SEQUENCE [GENOMIC DNA]</scope>
    <source>
        <tissue>Ovary</tissue>
    </source>
</reference>
<reference key="2">
    <citation type="journal article" date="1989" name="Curr. Genet.">
        <title>Conserved tRNA gene cluster in starfish mitochondrial DNA.</title>
        <authorList>
            <person name="Jacobs H.T."/>
            <person name="Asakawa S."/>
            <person name="Araki T."/>
            <person name="Miura K."/>
            <person name="Smith M.J."/>
            <person name="Watanabe K."/>
        </authorList>
    </citation>
    <scope>NUCLEOTIDE SEQUENCE [GENOMIC DNA] OF 1-129</scope>
</reference>
<proteinExistence type="inferred from homology"/>
<accession>P23650</accession>
<accession>Q37410</accession>
<evidence type="ECO:0000250" key="1"/>
<evidence type="ECO:0000255" key="2"/>
<evidence type="ECO:0000305" key="3"/>
<name>NU1M_PATPE</name>
<dbReference type="EC" id="7.1.1.2"/>
<dbReference type="EMBL" id="D16387">
    <property type="protein sequence ID" value="BAA03879.2"/>
    <property type="molecule type" value="Genomic_DNA"/>
</dbReference>
<dbReference type="EMBL" id="X16886">
    <property type="protein sequence ID" value="CAA34766.1"/>
    <property type="status" value="ALT_SEQ"/>
    <property type="molecule type" value="Genomic_DNA"/>
</dbReference>
<dbReference type="PIR" id="S70596">
    <property type="entry name" value="S70596"/>
</dbReference>
<dbReference type="RefSeq" id="NP_008167.2">
    <property type="nucleotide sequence ID" value="NC_001627.1"/>
</dbReference>
<dbReference type="SMR" id="P23650"/>
<dbReference type="GeneID" id="807817"/>
<dbReference type="CTD" id="4535"/>
<dbReference type="GO" id="GO:0005743">
    <property type="term" value="C:mitochondrial inner membrane"/>
    <property type="evidence" value="ECO:0007669"/>
    <property type="project" value="UniProtKB-SubCell"/>
</dbReference>
<dbReference type="GO" id="GO:0008137">
    <property type="term" value="F:NADH dehydrogenase (ubiquinone) activity"/>
    <property type="evidence" value="ECO:0007669"/>
    <property type="project" value="UniProtKB-EC"/>
</dbReference>
<dbReference type="GO" id="GO:0009060">
    <property type="term" value="P:aerobic respiration"/>
    <property type="evidence" value="ECO:0007669"/>
    <property type="project" value="TreeGrafter"/>
</dbReference>
<dbReference type="HAMAP" id="MF_01350">
    <property type="entry name" value="NDH1_NuoH"/>
    <property type="match status" value="1"/>
</dbReference>
<dbReference type="InterPro" id="IPR001694">
    <property type="entry name" value="NADH_UbQ_OxRdtase_su1/FPO"/>
</dbReference>
<dbReference type="InterPro" id="IPR018086">
    <property type="entry name" value="NADH_UbQ_OxRdtase_su1_CS"/>
</dbReference>
<dbReference type="PANTHER" id="PTHR11432">
    <property type="entry name" value="NADH DEHYDROGENASE SUBUNIT 1"/>
    <property type="match status" value="1"/>
</dbReference>
<dbReference type="PANTHER" id="PTHR11432:SF3">
    <property type="entry name" value="NADH-UBIQUINONE OXIDOREDUCTASE CHAIN 1"/>
    <property type="match status" value="1"/>
</dbReference>
<dbReference type="Pfam" id="PF00146">
    <property type="entry name" value="NADHdh"/>
    <property type="match status" value="1"/>
</dbReference>
<dbReference type="PROSITE" id="PS00667">
    <property type="entry name" value="COMPLEX1_ND1_1"/>
    <property type="match status" value="1"/>
</dbReference>
<dbReference type="PROSITE" id="PS00668">
    <property type="entry name" value="COMPLEX1_ND1_2"/>
    <property type="match status" value="1"/>
</dbReference>
<organism>
    <name type="scientific">Patiria pectinifera</name>
    <name type="common">Starfish</name>
    <name type="synonym">Asterina pectinifera</name>
    <dbReference type="NCBI Taxonomy" id="7594"/>
    <lineage>
        <taxon>Eukaryota</taxon>
        <taxon>Metazoa</taxon>
        <taxon>Echinodermata</taxon>
        <taxon>Eleutherozoa</taxon>
        <taxon>Asterozoa</taxon>
        <taxon>Asteroidea</taxon>
        <taxon>Valvatacea</taxon>
        <taxon>Valvatida</taxon>
        <taxon>Asterinidae</taxon>
        <taxon>Patiria</taxon>
    </lineage>
</organism>
<feature type="chain" id="PRO_0000117350" description="NADH-ubiquinone oxidoreductase chain 1">
    <location>
        <begin position="1"/>
        <end position="326"/>
    </location>
</feature>
<feature type="transmembrane region" description="Helical" evidence="2">
    <location>
        <begin position="4"/>
        <end position="24"/>
    </location>
</feature>
<feature type="transmembrane region" description="Helical" evidence="2">
    <location>
        <begin position="41"/>
        <end position="61"/>
    </location>
</feature>
<feature type="transmembrane region" description="Helical" evidence="2">
    <location>
        <begin position="73"/>
        <end position="93"/>
    </location>
</feature>
<feature type="transmembrane region" description="Helical" evidence="2">
    <location>
        <begin position="102"/>
        <end position="122"/>
    </location>
</feature>
<feature type="transmembrane region" description="Helical" evidence="2">
    <location>
        <begin position="148"/>
        <end position="168"/>
    </location>
</feature>
<feature type="transmembrane region" description="Helical" evidence="2">
    <location>
        <begin position="175"/>
        <end position="195"/>
    </location>
</feature>
<feature type="transmembrane region" description="Helical" evidence="2">
    <location>
        <begin position="227"/>
        <end position="247"/>
    </location>
</feature>
<feature type="transmembrane region" description="Helical" evidence="2">
    <location>
        <begin position="256"/>
        <end position="276"/>
    </location>
</feature>
<feature type="transmembrane region" description="Helical" evidence="2">
    <location>
        <begin position="299"/>
        <end position="319"/>
    </location>
</feature>
<protein>
    <recommendedName>
        <fullName>NADH-ubiquinone oxidoreductase chain 1</fullName>
        <ecNumber>7.1.1.2</ecNumber>
    </recommendedName>
    <alternativeName>
        <fullName>NADH dehydrogenase subunit 1</fullName>
    </alternativeName>
</protein>